<dbReference type="EMBL" id="CP001063">
    <property type="protein sequence ID" value="ACD09444.1"/>
    <property type="molecule type" value="Genomic_DNA"/>
</dbReference>
<dbReference type="RefSeq" id="WP_000063524.1">
    <property type="nucleotide sequence ID" value="NC_010658.1"/>
</dbReference>
<dbReference type="STRING" id="344609.SbBS512_E4385"/>
<dbReference type="KEGG" id="sbc:SbBS512_E4385"/>
<dbReference type="HOGENOM" id="CLU_066437_0_0_6"/>
<dbReference type="Proteomes" id="UP000001030">
    <property type="component" value="Chromosome"/>
</dbReference>
<dbReference type="GO" id="GO:0005886">
    <property type="term" value="C:plasma membrane"/>
    <property type="evidence" value="ECO:0007669"/>
    <property type="project" value="UniProtKB-SubCell"/>
</dbReference>
<dbReference type="GO" id="GO:0015153">
    <property type="term" value="F:rhamnose transmembrane transporter activity"/>
    <property type="evidence" value="ECO:0007669"/>
    <property type="project" value="UniProtKB-UniRule"/>
</dbReference>
<dbReference type="GO" id="GO:0015293">
    <property type="term" value="F:symporter activity"/>
    <property type="evidence" value="ECO:0007669"/>
    <property type="project" value="UniProtKB-KW"/>
</dbReference>
<dbReference type="HAMAP" id="MF_01532">
    <property type="entry name" value="RhaT"/>
    <property type="match status" value="1"/>
</dbReference>
<dbReference type="InterPro" id="IPR004673">
    <property type="entry name" value="L-rhamnose-proton_sym_RhaT"/>
</dbReference>
<dbReference type="NCBIfam" id="NF010021">
    <property type="entry name" value="PRK13499.1-1"/>
    <property type="match status" value="1"/>
</dbReference>
<dbReference type="NCBIfam" id="NF010023">
    <property type="entry name" value="PRK13499.1-3"/>
    <property type="match status" value="1"/>
</dbReference>
<dbReference type="NCBIfam" id="TIGR00776">
    <property type="entry name" value="RhaT"/>
    <property type="match status" value="1"/>
</dbReference>
<dbReference type="Pfam" id="PF06379">
    <property type="entry name" value="RhaT"/>
    <property type="match status" value="1"/>
</dbReference>
<reference key="1">
    <citation type="submission" date="2008-05" db="EMBL/GenBank/DDBJ databases">
        <title>Complete sequence of Shigella boydii serotype 18 strain BS512.</title>
        <authorList>
            <person name="Rasko D.A."/>
            <person name="Rosovitz M."/>
            <person name="Maurelli A.T."/>
            <person name="Myers G."/>
            <person name="Seshadri R."/>
            <person name="Cer R."/>
            <person name="Jiang L."/>
            <person name="Ravel J."/>
            <person name="Sebastian Y."/>
        </authorList>
    </citation>
    <scope>NUCLEOTIDE SEQUENCE [LARGE SCALE GENOMIC DNA]</scope>
    <source>
        <strain>CDC 3083-94 / BS512</strain>
    </source>
</reference>
<accession>B2TVP9</accession>
<sequence>MSNAITMGIFWHLIGAASAACFYAPFKKVKKWSWETMWSVGGIVSWIILPWAISALLLPNFWAYYSSFSLSTLLPVFLFGAMWGIGNINYGLTMRYLGMSMGIGIAIGITLIVGTLMTPIINGNFDVLLNTEGGRMTLLGVLVALIGVGIVTRAGQLKERKMGIKAEEFNLKKGLVLAVMCGIFSAGMSFAMNAAKPMHEAAAALGVDPLYVALPSYVIIMGGGAIINLGFCFIRLAKVKDLSLKADFSLAKPLIIHNVLLSALGGLMWYLQFFFYAWGHARIPAQYDYISWMLHMSFYVLCGGIVGLVLKEWNNAGRRPVTVLSLGCVVIIVAANIVGIGMAN</sequence>
<evidence type="ECO:0000255" key="1">
    <source>
        <dbReference type="HAMAP-Rule" id="MF_01532"/>
    </source>
</evidence>
<protein>
    <recommendedName>
        <fullName evidence="1">L-rhamnose-proton symporter</fullName>
    </recommendedName>
    <alternativeName>
        <fullName evidence="1">L-rhamnose-H(+) transport protein</fullName>
    </alternativeName>
</protein>
<proteinExistence type="inferred from homology"/>
<gene>
    <name evidence="1" type="primary">rhaT</name>
    <name type="ordered locus">SbBS512_E4385</name>
</gene>
<organism>
    <name type="scientific">Shigella boydii serotype 18 (strain CDC 3083-94 / BS512)</name>
    <dbReference type="NCBI Taxonomy" id="344609"/>
    <lineage>
        <taxon>Bacteria</taxon>
        <taxon>Pseudomonadati</taxon>
        <taxon>Pseudomonadota</taxon>
        <taxon>Gammaproteobacteria</taxon>
        <taxon>Enterobacterales</taxon>
        <taxon>Enterobacteriaceae</taxon>
        <taxon>Shigella</taxon>
    </lineage>
</organism>
<feature type="chain" id="PRO_1000146502" description="L-rhamnose-proton symporter">
    <location>
        <begin position="1"/>
        <end position="344"/>
    </location>
</feature>
<feature type="transmembrane region" description="Helical" evidence="1">
    <location>
        <begin position="4"/>
        <end position="24"/>
    </location>
</feature>
<feature type="transmembrane region" description="Helical" evidence="1">
    <location>
        <begin position="38"/>
        <end position="58"/>
    </location>
</feature>
<feature type="transmembrane region" description="Helical" evidence="1">
    <location>
        <begin position="68"/>
        <end position="88"/>
    </location>
</feature>
<feature type="transmembrane region" description="Helical" evidence="1">
    <location>
        <begin position="101"/>
        <end position="121"/>
    </location>
</feature>
<feature type="transmembrane region" description="Helical" evidence="1">
    <location>
        <begin position="137"/>
        <end position="157"/>
    </location>
</feature>
<feature type="transmembrane region" description="Helical" evidence="1">
    <location>
        <begin position="175"/>
        <end position="195"/>
    </location>
</feature>
<feature type="transmembrane region" description="Helical" evidence="1">
    <location>
        <begin position="214"/>
        <end position="234"/>
    </location>
</feature>
<feature type="transmembrane region" description="Helical" evidence="1">
    <location>
        <begin position="259"/>
        <end position="279"/>
    </location>
</feature>
<feature type="transmembrane region" description="Helical" evidence="1">
    <location>
        <begin position="290"/>
        <end position="310"/>
    </location>
</feature>
<feature type="transmembrane region" description="Helical" evidence="1">
    <location>
        <begin position="323"/>
        <end position="343"/>
    </location>
</feature>
<keyword id="KW-0997">Cell inner membrane</keyword>
<keyword id="KW-1003">Cell membrane</keyword>
<keyword id="KW-0472">Membrane</keyword>
<keyword id="KW-1185">Reference proteome</keyword>
<keyword id="KW-0762">Sugar transport</keyword>
<keyword id="KW-0769">Symport</keyword>
<keyword id="KW-0812">Transmembrane</keyword>
<keyword id="KW-1133">Transmembrane helix</keyword>
<keyword id="KW-0813">Transport</keyword>
<comment type="function">
    <text evidence="1">Uptake of L-rhamnose across the cytoplasmic membrane with the concomitant transport of protons into the cell (symport system).</text>
</comment>
<comment type="catalytic activity">
    <reaction evidence="1">
        <text>L-rhamnopyranose(in) + H(+)(in) = L-rhamnopyranose(out) + H(+)(out)</text>
        <dbReference type="Rhea" id="RHEA:29947"/>
        <dbReference type="ChEBI" id="CHEBI:15378"/>
        <dbReference type="ChEBI" id="CHEBI:62346"/>
    </reaction>
    <physiologicalReaction direction="right-to-left" evidence="1">
        <dbReference type="Rhea" id="RHEA:29949"/>
    </physiologicalReaction>
</comment>
<comment type="subcellular location">
    <subcellularLocation>
        <location evidence="1">Cell inner membrane</location>
        <topology evidence="1">Multi-pass membrane protein</topology>
    </subcellularLocation>
</comment>
<comment type="similarity">
    <text evidence="1">Belongs to the L-rhamnose transporter (TC 2.A.7.6) family.</text>
</comment>
<name>RHAT_SHIB3</name>